<proteinExistence type="inferred from homology"/>
<name>APT_CHLL2</name>
<gene>
    <name evidence="1" type="primary">apt</name>
    <name type="ordered locus">Clim_0353</name>
</gene>
<sequence>MPIKSRIRSIPDYPKKGIMFRDITTLIKDPVGFRLVIDSLTQRYLENGVDFDMIVGIEARGFIIGGALSYTLGKGFVPVRKPGKLPADVVSQEYELEYGSDKIEIHMDALEKGTRVLLVDDLLATGGTALAAAALVEKVGGVVAEMAFIVNLPDVGGEQKIRDKGYSIYSLTDFEGD</sequence>
<organism>
    <name type="scientific">Chlorobium limicola (strain DSM 245 / NBRC 103803 / 6330)</name>
    <dbReference type="NCBI Taxonomy" id="290315"/>
    <lineage>
        <taxon>Bacteria</taxon>
        <taxon>Pseudomonadati</taxon>
        <taxon>Chlorobiota</taxon>
        <taxon>Chlorobiia</taxon>
        <taxon>Chlorobiales</taxon>
        <taxon>Chlorobiaceae</taxon>
        <taxon>Chlorobium/Pelodictyon group</taxon>
        <taxon>Chlorobium</taxon>
    </lineage>
</organism>
<comment type="function">
    <text evidence="1">Catalyzes a salvage reaction resulting in the formation of AMP, that is energically less costly than de novo synthesis.</text>
</comment>
<comment type="catalytic activity">
    <reaction evidence="1">
        <text>AMP + diphosphate = 5-phospho-alpha-D-ribose 1-diphosphate + adenine</text>
        <dbReference type="Rhea" id="RHEA:16609"/>
        <dbReference type="ChEBI" id="CHEBI:16708"/>
        <dbReference type="ChEBI" id="CHEBI:33019"/>
        <dbReference type="ChEBI" id="CHEBI:58017"/>
        <dbReference type="ChEBI" id="CHEBI:456215"/>
        <dbReference type="EC" id="2.4.2.7"/>
    </reaction>
</comment>
<comment type="pathway">
    <text evidence="1">Purine metabolism; AMP biosynthesis via salvage pathway; AMP from adenine: step 1/1.</text>
</comment>
<comment type="subunit">
    <text evidence="1">Homodimer.</text>
</comment>
<comment type="subcellular location">
    <subcellularLocation>
        <location evidence="1">Cytoplasm</location>
    </subcellularLocation>
</comment>
<comment type="similarity">
    <text evidence="1">Belongs to the purine/pyrimidine phosphoribosyltransferase family.</text>
</comment>
<evidence type="ECO:0000255" key="1">
    <source>
        <dbReference type="HAMAP-Rule" id="MF_00004"/>
    </source>
</evidence>
<keyword id="KW-0963">Cytoplasm</keyword>
<keyword id="KW-0328">Glycosyltransferase</keyword>
<keyword id="KW-0660">Purine salvage</keyword>
<keyword id="KW-0808">Transferase</keyword>
<feature type="chain" id="PRO_1000088961" description="Adenine phosphoribosyltransferase">
    <location>
        <begin position="1"/>
        <end position="177"/>
    </location>
</feature>
<reference key="1">
    <citation type="submission" date="2008-05" db="EMBL/GenBank/DDBJ databases">
        <title>Complete sequence of Chlorobium limicola DSM 245.</title>
        <authorList>
            <consortium name="US DOE Joint Genome Institute"/>
            <person name="Lucas S."/>
            <person name="Copeland A."/>
            <person name="Lapidus A."/>
            <person name="Glavina del Rio T."/>
            <person name="Dalin E."/>
            <person name="Tice H."/>
            <person name="Bruce D."/>
            <person name="Goodwin L."/>
            <person name="Pitluck S."/>
            <person name="Schmutz J."/>
            <person name="Larimer F."/>
            <person name="Land M."/>
            <person name="Hauser L."/>
            <person name="Kyrpides N."/>
            <person name="Ovchinnikova G."/>
            <person name="Zhao F."/>
            <person name="Li T."/>
            <person name="Liu Z."/>
            <person name="Overmann J."/>
            <person name="Bryant D.A."/>
            <person name="Richardson P."/>
        </authorList>
    </citation>
    <scope>NUCLEOTIDE SEQUENCE [LARGE SCALE GENOMIC DNA]</scope>
    <source>
        <strain>DSM 245 / NBRC 103803 / 6330</strain>
    </source>
</reference>
<dbReference type="EC" id="2.4.2.7" evidence="1"/>
<dbReference type="EMBL" id="CP001097">
    <property type="protein sequence ID" value="ACD89446.1"/>
    <property type="molecule type" value="Genomic_DNA"/>
</dbReference>
<dbReference type="RefSeq" id="WP_012465327.1">
    <property type="nucleotide sequence ID" value="NC_010803.1"/>
</dbReference>
<dbReference type="SMR" id="B3EFG3"/>
<dbReference type="STRING" id="290315.Clim_0353"/>
<dbReference type="KEGG" id="cli:Clim_0353"/>
<dbReference type="eggNOG" id="COG0503">
    <property type="taxonomic scope" value="Bacteria"/>
</dbReference>
<dbReference type="HOGENOM" id="CLU_063339_3_0_10"/>
<dbReference type="OrthoDB" id="9803963at2"/>
<dbReference type="UniPathway" id="UPA00588">
    <property type="reaction ID" value="UER00646"/>
</dbReference>
<dbReference type="Proteomes" id="UP000008841">
    <property type="component" value="Chromosome"/>
</dbReference>
<dbReference type="GO" id="GO:0005737">
    <property type="term" value="C:cytoplasm"/>
    <property type="evidence" value="ECO:0007669"/>
    <property type="project" value="UniProtKB-SubCell"/>
</dbReference>
<dbReference type="GO" id="GO:0002055">
    <property type="term" value="F:adenine binding"/>
    <property type="evidence" value="ECO:0007669"/>
    <property type="project" value="TreeGrafter"/>
</dbReference>
<dbReference type="GO" id="GO:0003999">
    <property type="term" value="F:adenine phosphoribosyltransferase activity"/>
    <property type="evidence" value="ECO:0007669"/>
    <property type="project" value="UniProtKB-UniRule"/>
</dbReference>
<dbReference type="GO" id="GO:0016208">
    <property type="term" value="F:AMP binding"/>
    <property type="evidence" value="ECO:0007669"/>
    <property type="project" value="TreeGrafter"/>
</dbReference>
<dbReference type="GO" id="GO:0006168">
    <property type="term" value="P:adenine salvage"/>
    <property type="evidence" value="ECO:0007669"/>
    <property type="project" value="InterPro"/>
</dbReference>
<dbReference type="GO" id="GO:0044209">
    <property type="term" value="P:AMP salvage"/>
    <property type="evidence" value="ECO:0007669"/>
    <property type="project" value="UniProtKB-UniRule"/>
</dbReference>
<dbReference type="GO" id="GO:0006166">
    <property type="term" value="P:purine ribonucleoside salvage"/>
    <property type="evidence" value="ECO:0007669"/>
    <property type="project" value="UniProtKB-KW"/>
</dbReference>
<dbReference type="CDD" id="cd06223">
    <property type="entry name" value="PRTases_typeI"/>
    <property type="match status" value="1"/>
</dbReference>
<dbReference type="FunFam" id="3.40.50.2020:FF:000021">
    <property type="entry name" value="Adenine phosphoribosyltransferase"/>
    <property type="match status" value="1"/>
</dbReference>
<dbReference type="Gene3D" id="3.40.50.2020">
    <property type="match status" value="1"/>
</dbReference>
<dbReference type="HAMAP" id="MF_00004">
    <property type="entry name" value="Aden_phosphoribosyltr"/>
    <property type="match status" value="1"/>
</dbReference>
<dbReference type="InterPro" id="IPR005764">
    <property type="entry name" value="Ade_phspho_trans"/>
</dbReference>
<dbReference type="InterPro" id="IPR000836">
    <property type="entry name" value="PRibTrfase_dom"/>
</dbReference>
<dbReference type="InterPro" id="IPR029057">
    <property type="entry name" value="PRTase-like"/>
</dbReference>
<dbReference type="InterPro" id="IPR050054">
    <property type="entry name" value="UPRTase/APRTase"/>
</dbReference>
<dbReference type="NCBIfam" id="TIGR01090">
    <property type="entry name" value="apt"/>
    <property type="match status" value="1"/>
</dbReference>
<dbReference type="NCBIfam" id="NF002634">
    <property type="entry name" value="PRK02304.1-3"/>
    <property type="match status" value="1"/>
</dbReference>
<dbReference type="NCBIfam" id="NF002636">
    <property type="entry name" value="PRK02304.1-5"/>
    <property type="match status" value="1"/>
</dbReference>
<dbReference type="PANTHER" id="PTHR32315">
    <property type="entry name" value="ADENINE PHOSPHORIBOSYLTRANSFERASE"/>
    <property type="match status" value="1"/>
</dbReference>
<dbReference type="PANTHER" id="PTHR32315:SF3">
    <property type="entry name" value="ADENINE PHOSPHORIBOSYLTRANSFERASE"/>
    <property type="match status" value="1"/>
</dbReference>
<dbReference type="Pfam" id="PF00156">
    <property type="entry name" value="Pribosyltran"/>
    <property type="match status" value="1"/>
</dbReference>
<dbReference type="SUPFAM" id="SSF53271">
    <property type="entry name" value="PRTase-like"/>
    <property type="match status" value="1"/>
</dbReference>
<dbReference type="PROSITE" id="PS00103">
    <property type="entry name" value="PUR_PYR_PR_TRANSFER"/>
    <property type="match status" value="1"/>
</dbReference>
<accession>B3EFG3</accession>
<protein>
    <recommendedName>
        <fullName evidence="1">Adenine phosphoribosyltransferase</fullName>
        <shortName evidence="1">APRT</shortName>
        <ecNumber evidence="1">2.4.2.7</ecNumber>
    </recommendedName>
</protein>